<keyword id="KW-0007">Acetylation</keyword>
<keyword id="KW-0175">Coiled coil</keyword>
<keyword id="KW-0963">Cytoplasm</keyword>
<keyword id="KW-0396">Initiation factor</keyword>
<keyword id="KW-1017">Isopeptide bond</keyword>
<keyword id="KW-0597">Phosphoprotein</keyword>
<keyword id="KW-0648">Protein biosynthesis</keyword>
<keyword id="KW-1185">Reference proteome</keyword>
<keyword id="KW-0832">Ubl conjugation</keyword>
<dbReference type="EMBL" id="BC080788">
    <property type="protein sequence ID" value="AAH80788.1"/>
    <property type="molecule type" value="mRNA"/>
</dbReference>
<dbReference type="EMBL" id="AK082048">
    <property type="protein sequence ID" value="BAC38399.1"/>
    <property type="molecule type" value="mRNA"/>
</dbReference>
<dbReference type="CCDS" id="CCDS57122.1"/>
<dbReference type="RefSeq" id="NP_001242984.1">
    <property type="nucleotide sequence ID" value="NM_001256055.1"/>
</dbReference>
<dbReference type="SMR" id="Q66JS6"/>
<dbReference type="FunCoup" id="Q66JS6">
    <property type="interactions" value="1823"/>
</dbReference>
<dbReference type="STRING" id="10090.ENSMUSP00000054421"/>
<dbReference type="GlyGen" id="Q66JS6">
    <property type="glycosylation" value="1 site, 1 O-linked glycan (1 site)"/>
</dbReference>
<dbReference type="iPTMnet" id="Q66JS6"/>
<dbReference type="PhosphoSitePlus" id="Q66JS6"/>
<dbReference type="SwissPalm" id="Q66JS6"/>
<dbReference type="jPOST" id="Q66JS6"/>
<dbReference type="PaxDb" id="10090-ENSMUSP00000054421"/>
<dbReference type="PeptideAtlas" id="Q66JS6"/>
<dbReference type="ProteomicsDB" id="277841"/>
<dbReference type="Pumba" id="Q66JS6"/>
<dbReference type="Ensembl" id="ENSMUST00000057110.11">
    <property type="protein sequence ID" value="ENSMUSP00000054421.10"/>
    <property type="gene ID" value="ENSMUSG00000043424.11"/>
</dbReference>
<dbReference type="GeneID" id="100042807"/>
<dbReference type="KEGG" id="mmu:100042807"/>
<dbReference type="UCSC" id="uc008mab.3">
    <property type="organism name" value="mouse"/>
</dbReference>
<dbReference type="AGR" id="MGI:3704486"/>
<dbReference type="CTD" id="100042807"/>
<dbReference type="MGI" id="MGI:3704486">
    <property type="gene designation" value="Eif3j2"/>
</dbReference>
<dbReference type="VEuPathDB" id="HostDB:ENSMUSG00000043424"/>
<dbReference type="eggNOG" id="KOG4813">
    <property type="taxonomic scope" value="Eukaryota"/>
</dbReference>
<dbReference type="GeneTree" id="ENSGT00390000018400"/>
<dbReference type="HOGENOM" id="CLU_085806_2_1_1"/>
<dbReference type="InParanoid" id="Q66JS6"/>
<dbReference type="OMA" id="KNIANTW"/>
<dbReference type="OrthoDB" id="20381at2759"/>
<dbReference type="PhylomeDB" id="Q66JS6"/>
<dbReference type="TreeFam" id="TF101514"/>
<dbReference type="Reactome" id="R-MMU-156827">
    <property type="pathway name" value="L13a-mediated translational silencing of Ceruloplasmin expression"/>
</dbReference>
<dbReference type="Reactome" id="R-MMU-72649">
    <property type="pathway name" value="Translation initiation complex formation"/>
</dbReference>
<dbReference type="Reactome" id="R-MMU-72689">
    <property type="pathway name" value="Formation of a pool of free 40S subunits"/>
</dbReference>
<dbReference type="Reactome" id="R-MMU-72695">
    <property type="pathway name" value="Formation of the ternary complex, and subsequently, the 43S complex"/>
</dbReference>
<dbReference type="Reactome" id="R-MMU-72702">
    <property type="pathway name" value="Ribosomal scanning and start codon recognition"/>
</dbReference>
<dbReference type="Reactome" id="R-MMU-72706">
    <property type="pathway name" value="GTP hydrolysis and joining of the 60S ribosomal subunit"/>
</dbReference>
<dbReference type="BioGRID-ORCS" id="100042807">
    <property type="hits" value="7 hits in 75 CRISPR screens"/>
</dbReference>
<dbReference type="ChiTaRS" id="Eif3j2">
    <property type="organism name" value="mouse"/>
</dbReference>
<dbReference type="PRO" id="PR:Q66JS6"/>
<dbReference type="Proteomes" id="UP000000589">
    <property type="component" value="Chromosome 18"/>
</dbReference>
<dbReference type="RNAct" id="Q66JS6">
    <property type="molecule type" value="protein"/>
</dbReference>
<dbReference type="Bgee" id="ENSMUSG00000043424">
    <property type="expression patterns" value="Expressed in ectoplacental cone and 63 other cell types or tissues"/>
</dbReference>
<dbReference type="GO" id="GO:0016282">
    <property type="term" value="C:eukaryotic 43S preinitiation complex"/>
    <property type="evidence" value="ECO:0007669"/>
    <property type="project" value="UniProtKB-UniRule"/>
</dbReference>
<dbReference type="GO" id="GO:0033290">
    <property type="term" value="C:eukaryotic 48S preinitiation complex"/>
    <property type="evidence" value="ECO:0007669"/>
    <property type="project" value="UniProtKB-UniRule"/>
</dbReference>
<dbReference type="GO" id="GO:0005852">
    <property type="term" value="C:eukaryotic translation initiation factor 3 complex"/>
    <property type="evidence" value="ECO:0000250"/>
    <property type="project" value="UniProtKB"/>
</dbReference>
<dbReference type="GO" id="GO:0003743">
    <property type="term" value="F:translation initiation factor activity"/>
    <property type="evidence" value="ECO:0007669"/>
    <property type="project" value="UniProtKB-UniRule"/>
</dbReference>
<dbReference type="GO" id="GO:0001732">
    <property type="term" value="P:formation of cytoplasmic translation initiation complex"/>
    <property type="evidence" value="ECO:0007669"/>
    <property type="project" value="UniProtKB-UniRule"/>
</dbReference>
<dbReference type="FunFam" id="1.10.246.60:FF:000001">
    <property type="entry name" value="Eukaryotic translation initiation factor 3 subunit J"/>
    <property type="match status" value="1"/>
</dbReference>
<dbReference type="Gene3D" id="1.10.246.60">
    <property type="entry name" value="Eukaryotic translation initiation factor 3 like domains"/>
    <property type="match status" value="1"/>
</dbReference>
<dbReference type="HAMAP" id="MF_03009">
    <property type="entry name" value="eIF3j"/>
    <property type="match status" value="1"/>
</dbReference>
<dbReference type="InterPro" id="IPR023194">
    <property type="entry name" value="eIF3-like_dom_sf"/>
</dbReference>
<dbReference type="InterPro" id="IPR013906">
    <property type="entry name" value="eIF3j"/>
</dbReference>
<dbReference type="PANTHER" id="PTHR21681">
    <property type="entry name" value="EUKARYOTIC TRANSLATION INITIATION FACTOR 3 SUBUNIT J"/>
    <property type="match status" value="1"/>
</dbReference>
<dbReference type="PANTHER" id="PTHR21681:SF0">
    <property type="entry name" value="EUKARYOTIC TRANSLATION INITIATION FACTOR 3 SUBUNIT J"/>
    <property type="match status" value="1"/>
</dbReference>
<dbReference type="Pfam" id="PF08597">
    <property type="entry name" value="eIF3_subunit"/>
    <property type="match status" value="1"/>
</dbReference>
<proteinExistence type="evidence at protein level"/>
<sequence>MAAAAAAAAAAAAGDSDSWDADTFSMEDPVRKVAGGGTAGGDRWEGEDEDEDVKDNWDDDDDENKEEAEVKPEVKISEKKKIAEKIKEKERQQKKRQEEIKKRLEEPEESKVLTPEEQLADKLRLKKLQEESDLELAKETFGVNNTVYGIDAMNPSSRDDFTEFGKLLKDKITQYEKSLYYASFLEALVRDVCISLEIDDLKKITNSLTVLCSEKQKQEKQSKAKKKKKGVVPGGGLKATMKDDLADYGGYEGGYVQDYEDFM</sequence>
<evidence type="ECO:0000250" key="1">
    <source>
        <dbReference type="UniProtKB" id="O75822"/>
    </source>
</evidence>
<evidence type="ECO:0000255" key="2">
    <source>
        <dbReference type="HAMAP-Rule" id="MF_03009"/>
    </source>
</evidence>
<evidence type="ECO:0000256" key="3">
    <source>
        <dbReference type="SAM" id="MobiDB-lite"/>
    </source>
</evidence>
<evidence type="ECO:0000305" key="4"/>
<evidence type="ECO:0007744" key="5">
    <source>
    </source>
</evidence>
<feature type="initiator methionine" description="Removed" evidence="5">
    <location>
        <position position="1"/>
    </location>
</feature>
<feature type="chain" id="PRO_0000123507" description="Eukaryotic translation initiation factor 3 subunit J-B">
    <location>
        <begin position="2"/>
        <end position="263"/>
    </location>
</feature>
<feature type="region of interest" description="Disordered" evidence="3">
    <location>
        <begin position="1"/>
        <end position="115"/>
    </location>
</feature>
<feature type="region of interest" description="Sufficient for interaction with EIF3B" evidence="2">
    <location>
        <begin position="6"/>
        <end position="74"/>
    </location>
</feature>
<feature type="region of interest" description="Promotes stable association with the 40S ribosome" evidence="2">
    <location>
        <begin position="248"/>
        <end position="263"/>
    </location>
</feature>
<feature type="coiled-coil region" evidence="2">
    <location>
        <begin position="75"/>
        <end position="140"/>
    </location>
</feature>
<feature type="compositionally biased region" description="Low complexity" evidence="3">
    <location>
        <begin position="1"/>
        <end position="13"/>
    </location>
</feature>
<feature type="compositionally biased region" description="Acidic residues" evidence="3">
    <location>
        <begin position="45"/>
        <end position="66"/>
    </location>
</feature>
<feature type="compositionally biased region" description="Basic and acidic residues" evidence="3">
    <location>
        <begin position="67"/>
        <end position="111"/>
    </location>
</feature>
<feature type="modified residue" description="N-acetylalanine" evidence="5">
    <location>
        <position position="2"/>
    </location>
</feature>
<feature type="modified residue" description="Phosphoserine" evidence="1 2">
    <location>
        <position position="16"/>
    </location>
</feature>
<feature type="modified residue" description="Phosphoserine" evidence="1 2">
    <location>
        <position position="18"/>
    </location>
</feature>
<feature type="modified residue" description="Phosphoserine" evidence="1 2">
    <location>
        <position position="25"/>
    </location>
</feature>
<feature type="modified residue" description="Phosphothreonine" evidence="1 2">
    <location>
        <position position="114"/>
    </location>
</feature>
<feature type="modified residue" description="Phosphoserine" evidence="1 2">
    <location>
        <position position="132"/>
    </location>
</feature>
<feature type="modified residue" description="Phosphotyrosine" evidence="1">
    <location>
        <position position="259"/>
    </location>
</feature>
<feature type="cross-link" description="Glycyl lysine isopeptide (Lys-Gly) (interchain with G-Cter in SUMO2)" evidence="1">
    <location>
        <position position="111"/>
    </location>
</feature>
<feature type="sequence conflict" description="In Ref. 2; BAC38399." evidence="4" ref="2">
    <original>D</original>
    <variation>N</variation>
    <location>
        <position position="191"/>
    </location>
</feature>
<organism>
    <name type="scientific">Mus musculus</name>
    <name type="common">Mouse</name>
    <dbReference type="NCBI Taxonomy" id="10090"/>
    <lineage>
        <taxon>Eukaryota</taxon>
        <taxon>Metazoa</taxon>
        <taxon>Chordata</taxon>
        <taxon>Craniata</taxon>
        <taxon>Vertebrata</taxon>
        <taxon>Euteleostomi</taxon>
        <taxon>Mammalia</taxon>
        <taxon>Eutheria</taxon>
        <taxon>Euarchontoglires</taxon>
        <taxon>Glires</taxon>
        <taxon>Rodentia</taxon>
        <taxon>Myomorpha</taxon>
        <taxon>Muroidea</taxon>
        <taxon>Muridae</taxon>
        <taxon>Murinae</taxon>
        <taxon>Mus</taxon>
        <taxon>Mus</taxon>
    </lineage>
</organism>
<protein>
    <recommendedName>
        <fullName evidence="2">Eukaryotic translation initiation factor 3 subunit J-B</fullName>
        <shortName evidence="2">eIF3j-B</shortName>
    </recommendedName>
    <alternativeName>
        <fullName evidence="2">Eukaryotic translation initiation factor 3 subunit 1-B</fullName>
    </alternativeName>
    <alternativeName>
        <fullName evidence="2">eIF-3-alpha-B</fullName>
    </alternativeName>
    <alternativeName>
        <fullName evidence="2">eIF3 p35</fullName>
    </alternativeName>
</protein>
<gene>
    <name type="primary">Eif3j2</name>
    <name type="synonym">Eif3s1-2</name>
    <name type="synonym">Gm9781</name>
</gene>
<reference key="1">
    <citation type="journal article" date="2004" name="Genome Res.">
        <title>The status, quality, and expansion of the NIH full-length cDNA project: the Mammalian Gene Collection (MGC).</title>
        <authorList>
            <consortium name="The MGC Project Team"/>
        </authorList>
    </citation>
    <scope>NUCLEOTIDE SEQUENCE [LARGE SCALE MRNA]</scope>
    <source>
        <strain>FVB/N</strain>
        <tissue>Salivary gland</tissue>
    </source>
</reference>
<reference key="2">
    <citation type="journal article" date="2005" name="Science">
        <title>The transcriptional landscape of the mammalian genome.</title>
        <authorList>
            <person name="Carninci P."/>
            <person name="Kasukawa T."/>
            <person name="Katayama S."/>
            <person name="Gough J."/>
            <person name="Frith M.C."/>
            <person name="Maeda N."/>
            <person name="Oyama R."/>
            <person name="Ravasi T."/>
            <person name="Lenhard B."/>
            <person name="Wells C."/>
            <person name="Kodzius R."/>
            <person name="Shimokawa K."/>
            <person name="Bajic V.B."/>
            <person name="Brenner S.E."/>
            <person name="Batalov S."/>
            <person name="Forrest A.R."/>
            <person name="Zavolan M."/>
            <person name="Davis M.J."/>
            <person name="Wilming L.G."/>
            <person name="Aidinis V."/>
            <person name="Allen J.E."/>
            <person name="Ambesi-Impiombato A."/>
            <person name="Apweiler R."/>
            <person name="Aturaliya R.N."/>
            <person name="Bailey T.L."/>
            <person name="Bansal M."/>
            <person name="Baxter L."/>
            <person name="Beisel K.W."/>
            <person name="Bersano T."/>
            <person name="Bono H."/>
            <person name="Chalk A.M."/>
            <person name="Chiu K.P."/>
            <person name="Choudhary V."/>
            <person name="Christoffels A."/>
            <person name="Clutterbuck D.R."/>
            <person name="Crowe M.L."/>
            <person name="Dalla E."/>
            <person name="Dalrymple B.P."/>
            <person name="de Bono B."/>
            <person name="Della Gatta G."/>
            <person name="di Bernardo D."/>
            <person name="Down T."/>
            <person name="Engstrom P."/>
            <person name="Fagiolini M."/>
            <person name="Faulkner G."/>
            <person name="Fletcher C.F."/>
            <person name="Fukushima T."/>
            <person name="Furuno M."/>
            <person name="Futaki S."/>
            <person name="Gariboldi M."/>
            <person name="Georgii-Hemming P."/>
            <person name="Gingeras T.R."/>
            <person name="Gojobori T."/>
            <person name="Green R.E."/>
            <person name="Gustincich S."/>
            <person name="Harbers M."/>
            <person name="Hayashi Y."/>
            <person name="Hensch T.K."/>
            <person name="Hirokawa N."/>
            <person name="Hill D."/>
            <person name="Huminiecki L."/>
            <person name="Iacono M."/>
            <person name="Ikeo K."/>
            <person name="Iwama A."/>
            <person name="Ishikawa T."/>
            <person name="Jakt M."/>
            <person name="Kanapin A."/>
            <person name="Katoh M."/>
            <person name="Kawasawa Y."/>
            <person name="Kelso J."/>
            <person name="Kitamura H."/>
            <person name="Kitano H."/>
            <person name="Kollias G."/>
            <person name="Krishnan S.P."/>
            <person name="Kruger A."/>
            <person name="Kummerfeld S.K."/>
            <person name="Kurochkin I.V."/>
            <person name="Lareau L.F."/>
            <person name="Lazarevic D."/>
            <person name="Lipovich L."/>
            <person name="Liu J."/>
            <person name="Liuni S."/>
            <person name="McWilliam S."/>
            <person name="Madan Babu M."/>
            <person name="Madera M."/>
            <person name="Marchionni L."/>
            <person name="Matsuda H."/>
            <person name="Matsuzawa S."/>
            <person name="Miki H."/>
            <person name="Mignone F."/>
            <person name="Miyake S."/>
            <person name="Morris K."/>
            <person name="Mottagui-Tabar S."/>
            <person name="Mulder N."/>
            <person name="Nakano N."/>
            <person name="Nakauchi H."/>
            <person name="Ng P."/>
            <person name="Nilsson R."/>
            <person name="Nishiguchi S."/>
            <person name="Nishikawa S."/>
            <person name="Nori F."/>
            <person name="Ohara O."/>
            <person name="Okazaki Y."/>
            <person name="Orlando V."/>
            <person name="Pang K.C."/>
            <person name="Pavan W.J."/>
            <person name="Pavesi G."/>
            <person name="Pesole G."/>
            <person name="Petrovsky N."/>
            <person name="Piazza S."/>
            <person name="Reed J."/>
            <person name="Reid J.F."/>
            <person name="Ring B.Z."/>
            <person name="Ringwald M."/>
            <person name="Rost B."/>
            <person name="Ruan Y."/>
            <person name="Salzberg S.L."/>
            <person name="Sandelin A."/>
            <person name="Schneider C."/>
            <person name="Schoenbach C."/>
            <person name="Sekiguchi K."/>
            <person name="Semple C.A."/>
            <person name="Seno S."/>
            <person name="Sessa L."/>
            <person name="Sheng Y."/>
            <person name="Shibata Y."/>
            <person name="Shimada H."/>
            <person name="Shimada K."/>
            <person name="Silva D."/>
            <person name="Sinclair B."/>
            <person name="Sperling S."/>
            <person name="Stupka E."/>
            <person name="Sugiura K."/>
            <person name="Sultana R."/>
            <person name="Takenaka Y."/>
            <person name="Taki K."/>
            <person name="Tammoja K."/>
            <person name="Tan S.L."/>
            <person name="Tang S."/>
            <person name="Taylor M.S."/>
            <person name="Tegner J."/>
            <person name="Teichmann S.A."/>
            <person name="Ueda H.R."/>
            <person name="van Nimwegen E."/>
            <person name="Verardo R."/>
            <person name="Wei C.L."/>
            <person name="Yagi K."/>
            <person name="Yamanishi H."/>
            <person name="Zabarovsky E."/>
            <person name="Zhu S."/>
            <person name="Zimmer A."/>
            <person name="Hide W."/>
            <person name="Bult C."/>
            <person name="Grimmond S.M."/>
            <person name="Teasdale R.D."/>
            <person name="Liu E.T."/>
            <person name="Brusic V."/>
            <person name="Quackenbush J."/>
            <person name="Wahlestedt C."/>
            <person name="Mattick J.S."/>
            <person name="Hume D.A."/>
            <person name="Kai C."/>
            <person name="Sasaki D."/>
            <person name="Tomaru Y."/>
            <person name="Fukuda S."/>
            <person name="Kanamori-Katayama M."/>
            <person name="Suzuki M."/>
            <person name="Aoki J."/>
            <person name="Arakawa T."/>
            <person name="Iida J."/>
            <person name="Imamura K."/>
            <person name="Itoh M."/>
            <person name="Kato T."/>
            <person name="Kawaji H."/>
            <person name="Kawagashira N."/>
            <person name="Kawashima T."/>
            <person name="Kojima M."/>
            <person name="Kondo S."/>
            <person name="Konno H."/>
            <person name="Nakano K."/>
            <person name="Ninomiya N."/>
            <person name="Nishio T."/>
            <person name="Okada M."/>
            <person name="Plessy C."/>
            <person name="Shibata K."/>
            <person name="Shiraki T."/>
            <person name="Suzuki S."/>
            <person name="Tagami M."/>
            <person name="Waki K."/>
            <person name="Watahiki A."/>
            <person name="Okamura-Oho Y."/>
            <person name="Suzuki H."/>
            <person name="Kawai J."/>
            <person name="Hayashizaki Y."/>
        </authorList>
    </citation>
    <scope>NUCLEOTIDE SEQUENCE [LARGE SCALE MRNA] OF 42-263</scope>
    <source>
        <strain>C57BL/6J</strain>
        <tissue>Head</tissue>
    </source>
</reference>
<reference key="3">
    <citation type="journal article" date="2009" name="Mol. Cell. Proteomics">
        <title>Large scale localization of protein phosphorylation by use of electron capture dissociation mass spectrometry.</title>
        <authorList>
            <person name="Sweet S.M."/>
            <person name="Bailey C.M."/>
            <person name="Cunningham D.L."/>
            <person name="Heath J.K."/>
            <person name="Cooper H.J."/>
        </authorList>
    </citation>
    <scope>ACETYLATION [LARGE SCALE ANALYSIS] AT ALA-2</scope>
    <scope>CLEAVAGE OF INITIATOR METHIONINE [LARGE SCALE ANALYSIS]</scope>
    <scope>IDENTIFICATION BY MASS SPECTROMETRY [LARGE SCALE ANALYSIS]</scope>
    <source>
        <tissue>Embryonic fibroblast</tissue>
    </source>
</reference>
<name>EI3JB_MOUSE</name>
<accession>Q66JS6</accession>
<accession>Q8BUW6</accession>
<comment type="function">
    <text evidence="2">Component of the eukaryotic translation initiation factor 3 (eIF-3) complex, which is required for several steps in the initiation of protein synthesis. The eIF-3 complex associates with the 40S ribosome and facilitates the recruitment of eIF-1, eIF-1A, eIF-2:GTP:methionyl-tRNAi and eIF-5 to form the 43S pre-initiation complex (43S PIC). The eIF-3 complex stimulates mRNA recruitment to the 43S PIC and scanning of the mRNA for AUG recognition. The eIF-3 complex is also required for disassembly and recycling of post-termination ribosomal complexes and subsequently prevents premature joining of the 40S and 60S ribosomal subunits prior to initiation. The eIF-3 complex specifically targets and initiates translation of a subset of mRNAs involved in cell proliferation, including cell cycling, differentiation and apoptosis, and uses different modes of RNA stem-loop binding to exert either translational activation or repression. This subunit binds directly within the mRNA entry channel of the 40S ribosome to the aminoacyl (A) site. It may regulate the interaction between the 43S PIC and mRNA.</text>
</comment>
<comment type="subunit">
    <text evidence="2">Component of the eukaryotic translation initiation factor 3 (eIF-3) complex, which is composed of 13 subunits: EIF3A, EIF3B, EIF3C, EIF3D, EIF3E, EIF3F, EIF3G, EIF3H, EIF3I, EIF3J, EIF3K, EIF3L and EIF3M. The eIF-3 complex appears to include 3 stable modules: module A is composed of EIF3A, EIF3B, EIF3G and EIF3I; module B is composed of EIF3F, EIF3H, and EIF3M; and module C is composed of EIF3C, EIF3D, EIF3E, EIF3K and EIF3L. EIF3C of module C binds EIF3B of module A and EIF3H of module B, thereby linking the three modules. EIF3J is a labile subunit that binds to the eIF-3 complex via EIF3B. The eIF-3 complex interacts with RPS6KB1 under conditions of nutrient depletion. Mitogenic stimulation leads to binding and activation of a complex composed of MTOR and RPTOR, leading to phosphorylation and release of RPS6KB1 and binding of EIF4B to eIF-3.</text>
</comment>
<comment type="subcellular location">
    <subcellularLocation>
        <location evidence="2">Cytoplasm</location>
    </subcellularLocation>
</comment>
<comment type="PTM">
    <text evidence="2">Phosphorylated. Phosphorylation is enhanced upon serum stimulation.</text>
</comment>
<comment type="similarity">
    <text evidence="2">Belongs to the eIF-3 subunit J family.</text>
</comment>